<organism>
    <name type="scientific">Treponema pallidum (strain Nichols)</name>
    <dbReference type="NCBI Taxonomy" id="243276"/>
    <lineage>
        <taxon>Bacteria</taxon>
        <taxon>Pseudomonadati</taxon>
        <taxon>Spirochaetota</taxon>
        <taxon>Spirochaetia</taxon>
        <taxon>Spirochaetales</taxon>
        <taxon>Treponemataceae</taxon>
        <taxon>Treponema</taxon>
    </lineage>
</organism>
<accession>O83105</accession>
<dbReference type="EMBL" id="AE000520">
    <property type="protein sequence ID" value="AAC65065.1"/>
    <property type="molecule type" value="Genomic_DNA"/>
</dbReference>
<dbReference type="PIR" id="B71371">
    <property type="entry name" value="B71371"/>
</dbReference>
<dbReference type="RefSeq" id="WP_010881515.1">
    <property type="nucleotide sequence ID" value="NC_021490.2"/>
</dbReference>
<dbReference type="SMR" id="O83105"/>
<dbReference type="IntAct" id="O83105">
    <property type="interactions" value="12"/>
</dbReference>
<dbReference type="STRING" id="243276.TP_0066"/>
<dbReference type="EnsemblBacteria" id="AAC65065">
    <property type="protein sequence ID" value="AAC65065"/>
    <property type="gene ID" value="TP_0066"/>
</dbReference>
<dbReference type="KEGG" id="tpa:TP_0066"/>
<dbReference type="KEGG" id="tpw:TPANIC_0066"/>
<dbReference type="eggNOG" id="ENOG502ZPBI">
    <property type="taxonomic scope" value="Bacteria"/>
</dbReference>
<dbReference type="HOGENOM" id="CLU_2157247_0_0_12"/>
<dbReference type="OrthoDB" id="342681at2"/>
<dbReference type="Proteomes" id="UP000000811">
    <property type="component" value="Chromosome"/>
</dbReference>
<name>Y066_TREPA</name>
<protein>
    <recommendedName>
        <fullName>Uncharacterized protein TP_0066</fullName>
    </recommendedName>
</protein>
<keyword id="KW-1185">Reference proteome</keyword>
<gene>
    <name type="ordered locus">TP_0066</name>
</gene>
<feature type="chain" id="PRO_0000202184" description="Uncharacterized protein TP_0066">
    <location>
        <begin position="1"/>
        <end position="104"/>
    </location>
</feature>
<sequence length="104" mass="12013">MQRVLESDTPYFVKGIQRPVSTLSDRDRALLNRRGNAYLNEGKLQEAARVFITTGYHDGLTRIGDVYMRKADVLTALRFYYFARNEQKMRPIVSALSVLIRCLI</sequence>
<proteinExistence type="predicted"/>
<reference key="1">
    <citation type="journal article" date="1998" name="Science">
        <title>Complete genome sequence of Treponema pallidum, the syphilis spirochete.</title>
        <authorList>
            <person name="Fraser C.M."/>
            <person name="Norris S.J."/>
            <person name="Weinstock G.M."/>
            <person name="White O."/>
            <person name="Sutton G.G."/>
            <person name="Dodson R.J."/>
            <person name="Gwinn M.L."/>
            <person name="Hickey E.K."/>
            <person name="Clayton R.A."/>
            <person name="Ketchum K.A."/>
            <person name="Sodergren E."/>
            <person name="Hardham J.M."/>
            <person name="McLeod M.P."/>
            <person name="Salzberg S.L."/>
            <person name="Peterson J.D."/>
            <person name="Khalak H.G."/>
            <person name="Richardson D.L."/>
            <person name="Howell J.K."/>
            <person name="Chidambaram M."/>
            <person name="Utterback T.R."/>
            <person name="McDonald L.A."/>
            <person name="Artiach P."/>
            <person name="Bowman C."/>
            <person name="Cotton M.D."/>
            <person name="Fujii C."/>
            <person name="Garland S.A."/>
            <person name="Hatch B."/>
            <person name="Horst K."/>
            <person name="Roberts K.M."/>
            <person name="Sandusky M."/>
            <person name="Weidman J.F."/>
            <person name="Smith H.O."/>
            <person name="Venter J.C."/>
        </authorList>
    </citation>
    <scope>NUCLEOTIDE SEQUENCE [LARGE SCALE GENOMIC DNA]</scope>
    <source>
        <strain>Nichols</strain>
    </source>
</reference>